<keyword id="KW-0963">Cytoplasm</keyword>
<keyword id="KW-0210">Decarboxylase</keyword>
<keyword id="KW-0312">Gluconeogenesis</keyword>
<keyword id="KW-0342">GTP-binding</keyword>
<keyword id="KW-0456">Lyase</keyword>
<keyword id="KW-0464">Manganese</keyword>
<keyword id="KW-0479">Metal-binding</keyword>
<keyword id="KW-0547">Nucleotide-binding</keyword>
<keyword id="KW-1185">Reference proteome</keyword>
<protein>
    <recommendedName>
        <fullName evidence="1">Phosphoenolpyruvate carboxykinase [GTP]</fullName>
        <shortName evidence="1">PEP carboxykinase</shortName>
        <shortName evidence="1">PEPCK</shortName>
        <ecNumber evidence="1">4.1.1.32</ecNumber>
    </recommendedName>
</protein>
<accession>A3DJE3</accession>
<name>PCKG_ACET2</name>
<gene>
    <name evidence="1" type="primary">pckG</name>
    <name type="ordered locus">Cthe_2874</name>
</gene>
<dbReference type="EC" id="4.1.1.32" evidence="1"/>
<dbReference type="EMBL" id="CP000568">
    <property type="protein sequence ID" value="ABN54072.1"/>
    <property type="molecule type" value="Genomic_DNA"/>
</dbReference>
<dbReference type="SMR" id="A3DJE3"/>
<dbReference type="STRING" id="203119.Cthe_2874"/>
<dbReference type="KEGG" id="cth:Cthe_2874"/>
<dbReference type="eggNOG" id="COG1274">
    <property type="taxonomic scope" value="Bacteria"/>
</dbReference>
<dbReference type="HOGENOM" id="CLU_028872_1_1_9"/>
<dbReference type="UniPathway" id="UPA00138"/>
<dbReference type="Proteomes" id="UP000002145">
    <property type="component" value="Chromosome"/>
</dbReference>
<dbReference type="GO" id="GO:0005829">
    <property type="term" value="C:cytosol"/>
    <property type="evidence" value="ECO:0007669"/>
    <property type="project" value="TreeGrafter"/>
</dbReference>
<dbReference type="GO" id="GO:0005525">
    <property type="term" value="F:GTP binding"/>
    <property type="evidence" value="ECO:0007669"/>
    <property type="project" value="UniProtKB-UniRule"/>
</dbReference>
<dbReference type="GO" id="GO:0030145">
    <property type="term" value="F:manganese ion binding"/>
    <property type="evidence" value="ECO:0007669"/>
    <property type="project" value="UniProtKB-UniRule"/>
</dbReference>
<dbReference type="GO" id="GO:0004613">
    <property type="term" value="F:phosphoenolpyruvate carboxykinase (GTP) activity"/>
    <property type="evidence" value="ECO:0007669"/>
    <property type="project" value="UniProtKB-UniRule"/>
</dbReference>
<dbReference type="GO" id="GO:0071333">
    <property type="term" value="P:cellular response to glucose stimulus"/>
    <property type="evidence" value="ECO:0007669"/>
    <property type="project" value="TreeGrafter"/>
</dbReference>
<dbReference type="GO" id="GO:0006094">
    <property type="term" value="P:gluconeogenesis"/>
    <property type="evidence" value="ECO:0007669"/>
    <property type="project" value="UniProtKB-UniRule"/>
</dbReference>
<dbReference type="GO" id="GO:0046327">
    <property type="term" value="P:glycerol biosynthetic process from pyruvate"/>
    <property type="evidence" value="ECO:0007669"/>
    <property type="project" value="TreeGrafter"/>
</dbReference>
<dbReference type="GO" id="GO:0006107">
    <property type="term" value="P:oxaloacetate metabolic process"/>
    <property type="evidence" value="ECO:0007669"/>
    <property type="project" value="TreeGrafter"/>
</dbReference>
<dbReference type="GO" id="GO:0019543">
    <property type="term" value="P:propionate catabolic process"/>
    <property type="evidence" value="ECO:0007669"/>
    <property type="project" value="TreeGrafter"/>
</dbReference>
<dbReference type="GO" id="GO:0033993">
    <property type="term" value="P:response to lipid"/>
    <property type="evidence" value="ECO:0007669"/>
    <property type="project" value="TreeGrafter"/>
</dbReference>
<dbReference type="GO" id="GO:0042594">
    <property type="term" value="P:response to starvation"/>
    <property type="evidence" value="ECO:0007669"/>
    <property type="project" value="TreeGrafter"/>
</dbReference>
<dbReference type="CDD" id="cd00819">
    <property type="entry name" value="PEPCK_GTP"/>
    <property type="match status" value="1"/>
</dbReference>
<dbReference type="FunFam" id="3.40.449.10:FF:000005">
    <property type="entry name" value="Phosphoenolpyruvate carboxykinase [GTP]"/>
    <property type="match status" value="1"/>
</dbReference>
<dbReference type="Gene3D" id="3.90.228.20">
    <property type="match status" value="1"/>
</dbReference>
<dbReference type="Gene3D" id="3.40.449.10">
    <property type="entry name" value="Phosphoenolpyruvate Carboxykinase, domain 1"/>
    <property type="match status" value="1"/>
</dbReference>
<dbReference type="Gene3D" id="2.170.8.10">
    <property type="entry name" value="Phosphoenolpyruvate Carboxykinase, domain 2"/>
    <property type="match status" value="1"/>
</dbReference>
<dbReference type="HAMAP" id="MF_00452">
    <property type="entry name" value="PEPCK_GTP"/>
    <property type="match status" value="1"/>
</dbReference>
<dbReference type="InterPro" id="IPR018091">
    <property type="entry name" value="PEP_carboxykin_GTP_CS"/>
</dbReference>
<dbReference type="InterPro" id="IPR013035">
    <property type="entry name" value="PEP_carboxykinase_C"/>
</dbReference>
<dbReference type="InterPro" id="IPR008209">
    <property type="entry name" value="PEP_carboxykinase_GTP"/>
</dbReference>
<dbReference type="InterPro" id="IPR035077">
    <property type="entry name" value="PEP_carboxykinase_GTP_C"/>
</dbReference>
<dbReference type="InterPro" id="IPR035078">
    <property type="entry name" value="PEP_carboxykinase_GTP_N"/>
</dbReference>
<dbReference type="InterPro" id="IPR008210">
    <property type="entry name" value="PEP_carboxykinase_N"/>
</dbReference>
<dbReference type="NCBIfam" id="NF003253">
    <property type="entry name" value="PRK04210.1"/>
    <property type="match status" value="1"/>
</dbReference>
<dbReference type="PANTHER" id="PTHR11561">
    <property type="entry name" value="PHOSPHOENOLPYRUVATE CARBOXYKINASE"/>
    <property type="match status" value="1"/>
</dbReference>
<dbReference type="PANTHER" id="PTHR11561:SF0">
    <property type="entry name" value="PHOSPHOENOLPYRUVATE CARBOXYKINASE [GTP]-RELATED"/>
    <property type="match status" value="1"/>
</dbReference>
<dbReference type="Pfam" id="PF00821">
    <property type="entry name" value="PEPCK_GTP"/>
    <property type="match status" value="1"/>
</dbReference>
<dbReference type="Pfam" id="PF17297">
    <property type="entry name" value="PEPCK_N"/>
    <property type="match status" value="1"/>
</dbReference>
<dbReference type="PIRSF" id="PIRSF001348">
    <property type="entry name" value="PEP_carboxykinase_GTP"/>
    <property type="match status" value="1"/>
</dbReference>
<dbReference type="SUPFAM" id="SSF68923">
    <property type="entry name" value="PEP carboxykinase N-terminal domain"/>
    <property type="match status" value="1"/>
</dbReference>
<dbReference type="SUPFAM" id="SSF53795">
    <property type="entry name" value="PEP carboxykinase-like"/>
    <property type="match status" value="1"/>
</dbReference>
<dbReference type="PROSITE" id="PS00505">
    <property type="entry name" value="PEPCK_GTP"/>
    <property type="match status" value="1"/>
</dbReference>
<proteinExistence type="inferred from homology"/>
<comment type="function">
    <text evidence="1">Catalyzes the conversion of oxaloacetate (OAA) to phosphoenolpyruvate (PEP), the rate-limiting step in the metabolic pathway that produces glucose from lactate and other precursors derived from the citric acid cycle.</text>
</comment>
<comment type="catalytic activity">
    <reaction evidence="1">
        <text>oxaloacetate + GTP = phosphoenolpyruvate + GDP + CO2</text>
        <dbReference type="Rhea" id="RHEA:10388"/>
        <dbReference type="ChEBI" id="CHEBI:16452"/>
        <dbReference type="ChEBI" id="CHEBI:16526"/>
        <dbReference type="ChEBI" id="CHEBI:37565"/>
        <dbReference type="ChEBI" id="CHEBI:58189"/>
        <dbReference type="ChEBI" id="CHEBI:58702"/>
        <dbReference type="EC" id="4.1.1.32"/>
    </reaction>
</comment>
<comment type="cofactor">
    <cofactor evidence="1">
        <name>Mn(2+)</name>
        <dbReference type="ChEBI" id="CHEBI:29035"/>
    </cofactor>
    <text evidence="1">Binds 1 Mn(2+) ion per subunit.</text>
</comment>
<comment type="pathway">
    <text evidence="1">Carbohydrate biosynthesis; gluconeogenesis.</text>
</comment>
<comment type="subunit">
    <text evidence="1">Monomer.</text>
</comment>
<comment type="subcellular location">
    <subcellularLocation>
        <location evidence="1">Cytoplasm</location>
    </subcellularLocation>
</comment>
<comment type="similarity">
    <text evidence="1">Belongs to the phosphoenolpyruvate carboxykinase [GTP] family.</text>
</comment>
<sequence>MTSTNMTKNKKLLDWVKEMAEMCQPDEIYWCDGSEEENERLIKLMVDSGLATPLNPEKRPGCYLFRSDPSDVARVEDRTFIASKTKEDAGPTNNWIDPVELKATMKELYKGCMKGRTMYVIPFSMGPIGSPISKIGVELTDSPYVVVNMRIMTRIGKAVLDQLGEDGDFVPCLHSVGAPLKEGEKDKGWPCAPIEKKYISHFPEERTIWSYGSGYGGNALLGKKCFALRIASVMARDEGWLAEHMLILRITDPEGNKTYVTGAFPSACGKTNLAMLIPTIPGWKVETIGDDIAWMRFGKDGRLYAINPEAGFFGVAPGTSMDSNPNAMHTIKKNTIFTNVALTDDGDVWWEGIGTEPPAHLIDWQGKDWTPDSGTLAAHPNGRFTAPASQCPVIAPEWEDPEGVPISAILIGGRRPNTIPLVHESFDWNHGVFMGSIMGSEITAAAISNKIGQVRRDPFAMLPFIGYNVNDYLQHWLNMGTKTDPSKLPKIFYVNWFRKDSNGKWLWPGYGENSRVLKWIVERVNGKGKAVKTPIGYMPTVDAIDTTGLDVSKEDMEELLSVNKEQWLQEVESIKEHYKSYGEKLPKELWAQLEALEQRLKEYNG</sequence>
<organism>
    <name type="scientific">Acetivibrio thermocellus (strain ATCC 27405 / DSM 1237 / JCM 9322 / NBRC 103400 / NCIMB 10682 / NRRL B-4536 / VPI 7372)</name>
    <name type="common">Clostridium thermocellum</name>
    <dbReference type="NCBI Taxonomy" id="203119"/>
    <lineage>
        <taxon>Bacteria</taxon>
        <taxon>Bacillati</taxon>
        <taxon>Bacillota</taxon>
        <taxon>Clostridia</taxon>
        <taxon>Eubacteriales</taxon>
        <taxon>Oscillospiraceae</taxon>
        <taxon>Acetivibrio</taxon>
    </lineage>
</organism>
<evidence type="ECO:0000255" key="1">
    <source>
        <dbReference type="HAMAP-Rule" id="MF_00452"/>
    </source>
</evidence>
<reference key="1">
    <citation type="submission" date="2007-02" db="EMBL/GenBank/DDBJ databases">
        <title>Complete sequence of Clostridium thermocellum ATCC 27405.</title>
        <authorList>
            <consortium name="US DOE Joint Genome Institute"/>
            <person name="Copeland A."/>
            <person name="Lucas S."/>
            <person name="Lapidus A."/>
            <person name="Barry K."/>
            <person name="Detter J.C."/>
            <person name="Glavina del Rio T."/>
            <person name="Hammon N."/>
            <person name="Israni S."/>
            <person name="Dalin E."/>
            <person name="Tice H."/>
            <person name="Pitluck S."/>
            <person name="Chertkov O."/>
            <person name="Brettin T."/>
            <person name="Bruce D."/>
            <person name="Han C."/>
            <person name="Tapia R."/>
            <person name="Gilna P."/>
            <person name="Schmutz J."/>
            <person name="Larimer F."/>
            <person name="Land M."/>
            <person name="Hauser L."/>
            <person name="Kyrpides N."/>
            <person name="Mikhailova N."/>
            <person name="Wu J.H.D."/>
            <person name="Newcomb M."/>
            <person name="Richardson P."/>
        </authorList>
    </citation>
    <scope>NUCLEOTIDE SEQUENCE [LARGE SCALE GENOMIC DNA]</scope>
    <source>
        <strain>ATCC 27405 / DSM 1237 / JCM 9322 / NBRC 103400 / NCIMB 10682 / NRRL B-4536 / VPI 7372</strain>
    </source>
</reference>
<feature type="chain" id="PRO_1000080985" description="Phosphoenolpyruvate carboxykinase [GTP]">
    <location>
        <begin position="1"/>
        <end position="605"/>
    </location>
</feature>
<feature type="active site" evidence="1">
    <location>
        <position position="268"/>
    </location>
</feature>
<feature type="binding site" evidence="1">
    <location>
        <position position="74"/>
    </location>
    <ligand>
        <name>substrate</name>
    </ligand>
</feature>
<feature type="binding site" evidence="1">
    <location>
        <begin position="215"/>
        <end position="217"/>
    </location>
    <ligand>
        <name>substrate</name>
    </ligand>
</feature>
<feature type="binding site" evidence="1">
    <location>
        <position position="224"/>
    </location>
    <ligand>
        <name>Mn(2+)</name>
        <dbReference type="ChEBI" id="CHEBI:29035"/>
    </ligand>
</feature>
<feature type="binding site" evidence="1">
    <location>
        <position position="244"/>
    </location>
    <ligand>
        <name>Mn(2+)</name>
        <dbReference type="ChEBI" id="CHEBI:29035"/>
    </ligand>
</feature>
<feature type="binding site" evidence="1">
    <location>
        <position position="266"/>
    </location>
    <ligand>
        <name>substrate</name>
    </ligand>
</feature>
<feature type="binding site" evidence="1">
    <location>
        <begin position="267"/>
        <end position="272"/>
    </location>
    <ligand>
        <name>GTP</name>
        <dbReference type="ChEBI" id="CHEBI:37565"/>
    </ligand>
</feature>
<feature type="binding site" evidence="1">
    <location>
        <position position="291"/>
    </location>
    <ligand>
        <name>Mn(2+)</name>
        <dbReference type="ChEBI" id="CHEBI:29035"/>
    </ligand>
</feature>
<feature type="binding site" evidence="1">
    <location>
        <begin position="381"/>
        <end position="383"/>
    </location>
    <ligand>
        <name>substrate</name>
    </ligand>
</feature>
<feature type="binding site" evidence="1">
    <location>
        <position position="383"/>
    </location>
    <ligand>
        <name>GTP</name>
        <dbReference type="ChEBI" id="CHEBI:37565"/>
    </ligand>
</feature>
<feature type="binding site" evidence="1">
    <location>
        <position position="414"/>
    </location>
    <ligand>
        <name>GTP</name>
        <dbReference type="ChEBI" id="CHEBI:37565"/>
    </ligand>
</feature>
<feature type="binding site" evidence="1">
    <location>
        <begin position="510"/>
        <end position="513"/>
    </location>
    <ligand>
        <name>GTP</name>
        <dbReference type="ChEBI" id="CHEBI:37565"/>
    </ligand>
</feature>